<feature type="chain" id="PRO_0000273841" description="Large ribosomal subunit protein uL30">
    <location>
        <begin position="1"/>
        <end position="64"/>
    </location>
</feature>
<accession>Q211G6</accession>
<name>RL30_RHOPB</name>
<gene>
    <name evidence="1" type="primary">rpmD</name>
    <name type="ordered locus">RPC_3430</name>
</gene>
<organism>
    <name type="scientific">Rhodopseudomonas palustris (strain BisB18)</name>
    <dbReference type="NCBI Taxonomy" id="316056"/>
    <lineage>
        <taxon>Bacteria</taxon>
        <taxon>Pseudomonadati</taxon>
        <taxon>Pseudomonadota</taxon>
        <taxon>Alphaproteobacteria</taxon>
        <taxon>Hyphomicrobiales</taxon>
        <taxon>Nitrobacteraceae</taxon>
        <taxon>Rhodopseudomonas</taxon>
    </lineage>
</organism>
<sequence>MANAAKTITVEQIGSAIRRHHSQRATLIGLNLNKIGRTAELQDTPEVRGMITKVQHLVRIVDEK</sequence>
<keyword id="KW-0687">Ribonucleoprotein</keyword>
<keyword id="KW-0689">Ribosomal protein</keyword>
<protein>
    <recommendedName>
        <fullName evidence="1">Large ribosomal subunit protein uL30</fullName>
    </recommendedName>
    <alternativeName>
        <fullName evidence="2">50S ribosomal protein L30</fullName>
    </alternativeName>
</protein>
<evidence type="ECO:0000255" key="1">
    <source>
        <dbReference type="HAMAP-Rule" id="MF_01371"/>
    </source>
</evidence>
<evidence type="ECO:0000305" key="2"/>
<proteinExistence type="inferred from homology"/>
<reference key="1">
    <citation type="submission" date="2006-03" db="EMBL/GenBank/DDBJ databases">
        <title>Complete sequence of Rhodopseudomonas palustris BisB18.</title>
        <authorList>
            <consortium name="US DOE Joint Genome Institute"/>
            <person name="Copeland A."/>
            <person name="Lucas S."/>
            <person name="Lapidus A."/>
            <person name="Barry K."/>
            <person name="Detter J.C."/>
            <person name="Glavina del Rio T."/>
            <person name="Hammon N."/>
            <person name="Israni S."/>
            <person name="Dalin E."/>
            <person name="Tice H."/>
            <person name="Pitluck S."/>
            <person name="Chain P."/>
            <person name="Malfatti S."/>
            <person name="Shin M."/>
            <person name="Vergez L."/>
            <person name="Schmutz J."/>
            <person name="Larimer F."/>
            <person name="Land M."/>
            <person name="Hauser L."/>
            <person name="Pelletier D.A."/>
            <person name="Kyrpides N."/>
            <person name="Anderson I."/>
            <person name="Oda Y."/>
            <person name="Harwood C.S."/>
            <person name="Richardson P."/>
        </authorList>
    </citation>
    <scope>NUCLEOTIDE SEQUENCE [LARGE SCALE GENOMIC DNA]</scope>
    <source>
        <strain>BisB18</strain>
    </source>
</reference>
<dbReference type="EMBL" id="CP000301">
    <property type="protein sequence ID" value="ABD88970.1"/>
    <property type="molecule type" value="Genomic_DNA"/>
</dbReference>
<dbReference type="SMR" id="Q211G6"/>
<dbReference type="STRING" id="316056.RPC_3430"/>
<dbReference type="KEGG" id="rpc:RPC_3430"/>
<dbReference type="eggNOG" id="COG1841">
    <property type="taxonomic scope" value="Bacteria"/>
</dbReference>
<dbReference type="HOGENOM" id="CLU_131047_1_2_5"/>
<dbReference type="OrthoDB" id="9812790at2"/>
<dbReference type="GO" id="GO:0022625">
    <property type="term" value="C:cytosolic large ribosomal subunit"/>
    <property type="evidence" value="ECO:0007669"/>
    <property type="project" value="TreeGrafter"/>
</dbReference>
<dbReference type="GO" id="GO:0003735">
    <property type="term" value="F:structural constituent of ribosome"/>
    <property type="evidence" value="ECO:0007669"/>
    <property type="project" value="InterPro"/>
</dbReference>
<dbReference type="GO" id="GO:0006412">
    <property type="term" value="P:translation"/>
    <property type="evidence" value="ECO:0007669"/>
    <property type="project" value="UniProtKB-UniRule"/>
</dbReference>
<dbReference type="CDD" id="cd01658">
    <property type="entry name" value="Ribosomal_L30"/>
    <property type="match status" value="1"/>
</dbReference>
<dbReference type="Gene3D" id="3.30.1390.20">
    <property type="entry name" value="Ribosomal protein L30, ferredoxin-like fold domain"/>
    <property type="match status" value="1"/>
</dbReference>
<dbReference type="HAMAP" id="MF_01371_B">
    <property type="entry name" value="Ribosomal_uL30_B"/>
    <property type="match status" value="1"/>
</dbReference>
<dbReference type="InterPro" id="IPR036919">
    <property type="entry name" value="Ribo_uL30_ferredoxin-like_sf"/>
</dbReference>
<dbReference type="InterPro" id="IPR005996">
    <property type="entry name" value="Ribosomal_uL30_bac-type"/>
</dbReference>
<dbReference type="InterPro" id="IPR016082">
    <property type="entry name" value="Ribosomal_uL30_ferredoxin-like"/>
</dbReference>
<dbReference type="NCBIfam" id="TIGR01308">
    <property type="entry name" value="rpmD_bact"/>
    <property type="match status" value="1"/>
</dbReference>
<dbReference type="PANTHER" id="PTHR15892:SF2">
    <property type="entry name" value="LARGE RIBOSOMAL SUBUNIT PROTEIN UL30M"/>
    <property type="match status" value="1"/>
</dbReference>
<dbReference type="PANTHER" id="PTHR15892">
    <property type="entry name" value="MITOCHONDRIAL RIBOSOMAL PROTEIN L30"/>
    <property type="match status" value="1"/>
</dbReference>
<dbReference type="Pfam" id="PF00327">
    <property type="entry name" value="Ribosomal_L30"/>
    <property type="match status" value="1"/>
</dbReference>
<dbReference type="PIRSF" id="PIRSF002211">
    <property type="entry name" value="Ribosomal_L30_bac-type"/>
    <property type="match status" value="1"/>
</dbReference>
<dbReference type="SUPFAM" id="SSF55129">
    <property type="entry name" value="Ribosomal protein L30p/L7e"/>
    <property type="match status" value="1"/>
</dbReference>
<comment type="subunit">
    <text evidence="1">Part of the 50S ribosomal subunit.</text>
</comment>
<comment type="similarity">
    <text evidence="1">Belongs to the universal ribosomal protein uL30 family.</text>
</comment>